<evidence type="ECO:0000255" key="1">
    <source>
        <dbReference type="HAMAP-Rule" id="MF_01631"/>
    </source>
</evidence>
<comment type="function">
    <text evidence="1">Catalyzes the last two sequential reactions in the de novo biosynthetic pathway for UDP-N-acetylglucosamine (UDP-GlcNAc). The C-terminal domain catalyzes the transfer of acetyl group from acetyl coenzyme A to glucosamine-1-phosphate (GlcN-1-P) to produce N-acetylglucosamine-1-phosphate (GlcNAc-1-P), which is converted into UDP-GlcNAc by the transfer of uridine 5-monophosphate (from uridine 5-triphosphate), a reaction catalyzed by the N-terminal domain.</text>
</comment>
<comment type="catalytic activity">
    <reaction evidence="1">
        <text>alpha-D-glucosamine 1-phosphate + acetyl-CoA = N-acetyl-alpha-D-glucosamine 1-phosphate + CoA + H(+)</text>
        <dbReference type="Rhea" id="RHEA:13725"/>
        <dbReference type="ChEBI" id="CHEBI:15378"/>
        <dbReference type="ChEBI" id="CHEBI:57287"/>
        <dbReference type="ChEBI" id="CHEBI:57288"/>
        <dbReference type="ChEBI" id="CHEBI:57776"/>
        <dbReference type="ChEBI" id="CHEBI:58516"/>
        <dbReference type="EC" id="2.3.1.157"/>
    </reaction>
</comment>
<comment type="catalytic activity">
    <reaction evidence="1">
        <text>N-acetyl-alpha-D-glucosamine 1-phosphate + UTP + H(+) = UDP-N-acetyl-alpha-D-glucosamine + diphosphate</text>
        <dbReference type="Rhea" id="RHEA:13509"/>
        <dbReference type="ChEBI" id="CHEBI:15378"/>
        <dbReference type="ChEBI" id="CHEBI:33019"/>
        <dbReference type="ChEBI" id="CHEBI:46398"/>
        <dbReference type="ChEBI" id="CHEBI:57705"/>
        <dbReference type="ChEBI" id="CHEBI:57776"/>
        <dbReference type="EC" id="2.7.7.23"/>
    </reaction>
</comment>
<comment type="cofactor">
    <cofactor evidence="1">
        <name>Mg(2+)</name>
        <dbReference type="ChEBI" id="CHEBI:18420"/>
    </cofactor>
    <text evidence="1">Binds 1 Mg(2+) ion per subunit.</text>
</comment>
<comment type="pathway">
    <text evidence="1">Nucleotide-sugar biosynthesis; UDP-N-acetyl-alpha-D-glucosamine biosynthesis; N-acetyl-alpha-D-glucosamine 1-phosphate from alpha-D-glucosamine 6-phosphate (route II): step 2/2.</text>
</comment>
<comment type="pathway">
    <text evidence="1">Nucleotide-sugar biosynthesis; UDP-N-acetyl-alpha-D-glucosamine biosynthesis; UDP-N-acetyl-alpha-D-glucosamine from N-acetyl-alpha-D-glucosamine 1-phosphate: step 1/1.</text>
</comment>
<comment type="pathway">
    <text evidence="1">Bacterial outer membrane biogenesis; LPS lipid A biosynthesis.</text>
</comment>
<comment type="subunit">
    <text evidence="1">Homotrimer.</text>
</comment>
<comment type="subcellular location">
    <subcellularLocation>
        <location evidence="1">Cytoplasm</location>
    </subcellularLocation>
</comment>
<comment type="similarity">
    <text evidence="1">In the N-terminal section; belongs to the N-acetylglucosamine-1-phosphate uridyltransferase family.</text>
</comment>
<comment type="similarity">
    <text evidence="1">In the C-terminal section; belongs to the transferase hexapeptide repeat family.</text>
</comment>
<protein>
    <recommendedName>
        <fullName evidence="1">Bifunctional protein GlmU</fullName>
    </recommendedName>
    <domain>
        <recommendedName>
            <fullName evidence="1">UDP-N-acetylglucosamine pyrophosphorylase</fullName>
            <ecNumber evidence="1">2.7.7.23</ecNumber>
        </recommendedName>
        <alternativeName>
            <fullName evidence="1">N-acetylglucosamine-1-phosphate uridyltransferase</fullName>
        </alternativeName>
    </domain>
    <domain>
        <recommendedName>
            <fullName evidence="1">Glucosamine-1-phosphate N-acetyltransferase</fullName>
            <ecNumber evidence="1">2.3.1.157</ecNumber>
        </recommendedName>
    </domain>
</protein>
<gene>
    <name evidence="1" type="primary">glmU</name>
    <name type="ordered locus">Atu1787</name>
    <name type="ORF">AGR_C_3287</name>
</gene>
<feature type="chain" id="PRO_0000233721" description="Bifunctional protein GlmU">
    <location>
        <begin position="1"/>
        <end position="453"/>
    </location>
</feature>
<feature type="region of interest" description="Pyrophosphorylase" evidence="1">
    <location>
        <begin position="1"/>
        <end position="231"/>
    </location>
</feature>
<feature type="region of interest" description="Linker" evidence="1">
    <location>
        <begin position="232"/>
        <end position="252"/>
    </location>
</feature>
<feature type="region of interest" description="N-acetyltransferase" evidence="1">
    <location>
        <begin position="253"/>
        <end position="453"/>
    </location>
</feature>
<feature type="active site" description="Proton acceptor" evidence="1">
    <location>
        <position position="348"/>
    </location>
</feature>
<feature type="binding site" evidence="1">
    <location>
        <begin position="10"/>
        <end position="13"/>
    </location>
    <ligand>
        <name>UDP-N-acetyl-alpha-D-glucosamine</name>
        <dbReference type="ChEBI" id="CHEBI:57705"/>
    </ligand>
</feature>
<feature type="binding site" evidence="1">
    <location>
        <position position="24"/>
    </location>
    <ligand>
        <name>UDP-N-acetyl-alpha-D-glucosamine</name>
        <dbReference type="ChEBI" id="CHEBI:57705"/>
    </ligand>
</feature>
<feature type="binding site" evidence="1">
    <location>
        <position position="77"/>
    </location>
    <ligand>
        <name>UDP-N-acetyl-alpha-D-glucosamine</name>
        <dbReference type="ChEBI" id="CHEBI:57705"/>
    </ligand>
</feature>
<feature type="binding site" evidence="1">
    <location>
        <begin position="82"/>
        <end position="83"/>
    </location>
    <ligand>
        <name>UDP-N-acetyl-alpha-D-glucosamine</name>
        <dbReference type="ChEBI" id="CHEBI:57705"/>
    </ligand>
</feature>
<feature type="binding site" evidence="1">
    <location>
        <begin position="105"/>
        <end position="107"/>
    </location>
    <ligand>
        <name>UDP-N-acetyl-alpha-D-glucosamine</name>
        <dbReference type="ChEBI" id="CHEBI:57705"/>
    </ligand>
</feature>
<feature type="binding site" evidence="1">
    <location>
        <position position="107"/>
    </location>
    <ligand>
        <name>Mg(2+)</name>
        <dbReference type="ChEBI" id="CHEBI:18420"/>
    </ligand>
</feature>
<feature type="binding site" evidence="1">
    <location>
        <position position="143"/>
    </location>
    <ligand>
        <name>UDP-N-acetyl-alpha-D-glucosamine</name>
        <dbReference type="ChEBI" id="CHEBI:57705"/>
    </ligand>
</feature>
<feature type="binding site" evidence="1">
    <location>
        <position position="157"/>
    </location>
    <ligand>
        <name>UDP-N-acetyl-alpha-D-glucosamine</name>
        <dbReference type="ChEBI" id="CHEBI:57705"/>
    </ligand>
</feature>
<feature type="binding site" evidence="1">
    <location>
        <position position="172"/>
    </location>
    <ligand>
        <name>UDP-N-acetyl-alpha-D-glucosamine</name>
        <dbReference type="ChEBI" id="CHEBI:57705"/>
    </ligand>
</feature>
<feature type="binding site" evidence="1">
    <location>
        <position position="229"/>
    </location>
    <ligand>
        <name>Mg(2+)</name>
        <dbReference type="ChEBI" id="CHEBI:18420"/>
    </ligand>
</feature>
<feature type="binding site" evidence="1">
    <location>
        <position position="229"/>
    </location>
    <ligand>
        <name>UDP-N-acetyl-alpha-D-glucosamine</name>
        <dbReference type="ChEBI" id="CHEBI:57705"/>
    </ligand>
</feature>
<feature type="binding site" evidence="1">
    <location>
        <position position="318"/>
    </location>
    <ligand>
        <name>UDP-N-acetyl-alpha-D-glucosamine</name>
        <dbReference type="ChEBI" id="CHEBI:57705"/>
    </ligand>
</feature>
<feature type="binding site" evidence="1">
    <location>
        <position position="336"/>
    </location>
    <ligand>
        <name>UDP-N-acetyl-alpha-D-glucosamine</name>
        <dbReference type="ChEBI" id="CHEBI:57705"/>
    </ligand>
</feature>
<feature type="binding site" evidence="1">
    <location>
        <position position="351"/>
    </location>
    <ligand>
        <name>UDP-N-acetyl-alpha-D-glucosamine</name>
        <dbReference type="ChEBI" id="CHEBI:57705"/>
    </ligand>
</feature>
<feature type="binding site" evidence="1">
    <location>
        <position position="362"/>
    </location>
    <ligand>
        <name>UDP-N-acetyl-alpha-D-glucosamine</name>
        <dbReference type="ChEBI" id="CHEBI:57705"/>
    </ligand>
</feature>
<feature type="binding site" evidence="1">
    <location>
        <position position="365"/>
    </location>
    <ligand>
        <name>acetyl-CoA</name>
        <dbReference type="ChEBI" id="CHEBI:57288"/>
    </ligand>
</feature>
<feature type="binding site" evidence="1">
    <location>
        <begin position="371"/>
        <end position="372"/>
    </location>
    <ligand>
        <name>acetyl-CoA</name>
        <dbReference type="ChEBI" id="CHEBI:57288"/>
    </ligand>
</feature>
<feature type="binding site" evidence="1">
    <location>
        <position position="390"/>
    </location>
    <ligand>
        <name>acetyl-CoA</name>
        <dbReference type="ChEBI" id="CHEBI:57288"/>
    </ligand>
</feature>
<feature type="binding site" evidence="1">
    <location>
        <position position="408"/>
    </location>
    <ligand>
        <name>acetyl-CoA</name>
        <dbReference type="ChEBI" id="CHEBI:57288"/>
    </ligand>
</feature>
<feature type="binding site" evidence="1">
    <location>
        <position position="425"/>
    </location>
    <ligand>
        <name>acetyl-CoA</name>
        <dbReference type="ChEBI" id="CHEBI:57288"/>
    </ligand>
</feature>
<organism>
    <name type="scientific">Agrobacterium fabrum (strain C58 / ATCC 33970)</name>
    <name type="common">Agrobacterium tumefaciens (strain C58)</name>
    <dbReference type="NCBI Taxonomy" id="176299"/>
    <lineage>
        <taxon>Bacteria</taxon>
        <taxon>Pseudomonadati</taxon>
        <taxon>Pseudomonadota</taxon>
        <taxon>Alphaproteobacteria</taxon>
        <taxon>Hyphomicrobiales</taxon>
        <taxon>Rhizobiaceae</taxon>
        <taxon>Rhizobium/Agrobacterium group</taxon>
        <taxon>Agrobacterium</taxon>
        <taxon>Agrobacterium tumefaciens complex</taxon>
    </lineage>
</organism>
<sequence>MERSSLAVILAAGDSTRMKSSKSKVLHPVAGRPMIGHVVEAVAGAGVGAVALVVGRDADNVAAAASLKGLQVEAFLQKERKGTGHAVLAAREAIKRGFDDVIVAYGDVPLITSATLDRAREAIAAGADVAVIGFHTDRPTGYGRLLVENGELVAIREEKDATDEERKVTWCNSGLMAINGRNALDLLDRIGNSNVKGEYYLTDVVEIARSLGRRAIAIDAPEKELTGCNNRAELAFIERLWQERRRHELMVDGVSMIAPETVFLSFDTKIGQDVLIEPNVVFGPGVTIEPGAIVHAFSHLEGAHLAEGAVVGPFARLRPGANLHANAKVGNFCEVKKAEIGEGAKVNHLTYIGDAFVGAGSNIGAGAITCNYDGYNKSETRIGANSFIGSNSSLVAPVTIGERAYIASGSVITDDVPADALAFGRARQEVKPGRAVALRERAKAQKEAKKKSS</sequence>
<reference key="1">
    <citation type="journal article" date="2001" name="Science">
        <title>The genome of the natural genetic engineer Agrobacterium tumefaciens C58.</title>
        <authorList>
            <person name="Wood D.W."/>
            <person name="Setubal J.C."/>
            <person name="Kaul R."/>
            <person name="Monks D.E."/>
            <person name="Kitajima J.P."/>
            <person name="Okura V.K."/>
            <person name="Zhou Y."/>
            <person name="Chen L."/>
            <person name="Wood G.E."/>
            <person name="Almeida N.F. Jr."/>
            <person name="Woo L."/>
            <person name="Chen Y."/>
            <person name="Paulsen I.T."/>
            <person name="Eisen J.A."/>
            <person name="Karp P.D."/>
            <person name="Bovee D. Sr."/>
            <person name="Chapman P."/>
            <person name="Clendenning J."/>
            <person name="Deatherage G."/>
            <person name="Gillet W."/>
            <person name="Grant C."/>
            <person name="Kutyavin T."/>
            <person name="Levy R."/>
            <person name="Li M.-J."/>
            <person name="McClelland E."/>
            <person name="Palmieri A."/>
            <person name="Raymond C."/>
            <person name="Rouse G."/>
            <person name="Saenphimmachak C."/>
            <person name="Wu Z."/>
            <person name="Romero P."/>
            <person name="Gordon D."/>
            <person name="Zhang S."/>
            <person name="Yoo H."/>
            <person name="Tao Y."/>
            <person name="Biddle P."/>
            <person name="Jung M."/>
            <person name="Krespan W."/>
            <person name="Perry M."/>
            <person name="Gordon-Kamm B."/>
            <person name="Liao L."/>
            <person name="Kim S."/>
            <person name="Hendrick C."/>
            <person name="Zhao Z.-Y."/>
            <person name="Dolan M."/>
            <person name="Chumley F."/>
            <person name="Tingey S.V."/>
            <person name="Tomb J.-F."/>
            <person name="Gordon M.P."/>
            <person name="Olson M.V."/>
            <person name="Nester E.W."/>
        </authorList>
    </citation>
    <scope>NUCLEOTIDE SEQUENCE [LARGE SCALE GENOMIC DNA]</scope>
    <source>
        <strain>C58 / ATCC 33970</strain>
    </source>
</reference>
<reference key="2">
    <citation type="journal article" date="2001" name="Science">
        <title>Genome sequence of the plant pathogen and biotechnology agent Agrobacterium tumefaciens C58.</title>
        <authorList>
            <person name="Goodner B."/>
            <person name="Hinkle G."/>
            <person name="Gattung S."/>
            <person name="Miller N."/>
            <person name="Blanchard M."/>
            <person name="Qurollo B."/>
            <person name="Goldman B.S."/>
            <person name="Cao Y."/>
            <person name="Askenazi M."/>
            <person name="Halling C."/>
            <person name="Mullin L."/>
            <person name="Houmiel K."/>
            <person name="Gordon J."/>
            <person name="Vaudin M."/>
            <person name="Iartchouk O."/>
            <person name="Epp A."/>
            <person name="Liu F."/>
            <person name="Wollam C."/>
            <person name="Allinger M."/>
            <person name="Doughty D."/>
            <person name="Scott C."/>
            <person name="Lappas C."/>
            <person name="Markelz B."/>
            <person name="Flanagan C."/>
            <person name="Crowell C."/>
            <person name="Gurson J."/>
            <person name="Lomo C."/>
            <person name="Sear C."/>
            <person name="Strub G."/>
            <person name="Cielo C."/>
            <person name="Slater S."/>
        </authorList>
    </citation>
    <scope>NUCLEOTIDE SEQUENCE [LARGE SCALE GENOMIC DNA]</scope>
    <source>
        <strain>C58 / ATCC 33970</strain>
    </source>
</reference>
<accession>Q8UEH0</accession>
<accession>Q7CYJ0</accession>
<keyword id="KW-0012">Acyltransferase</keyword>
<keyword id="KW-0133">Cell shape</keyword>
<keyword id="KW-0961">Cell wall biogenesis/degradation</keyword>
<keyword id="KW-0963">Cytoplasm</keyword>
<keyword id="KW-0460">Magnesium</keyword>
<keyword id="KW-0479">Metal-binding</keyword>
<keyword id="KW-0511">Multifunctional enzyme</keyword>
<keyword id="KW-0548">Nucleotidyltransferase</keyword>
<keyword id="KW-0573">Peptidoglycan synthesis</keyword>
<keyword id="KW-1185">Reference proteome</keyword>
<keyword id="KW-0677">Repeat</keyword>
<keyword id="KW-0808">Transferase</keyword>
<name>GLMU_AGRFC</name>
<proteinExistence type="inferred from homology"/>
<dbReference type="EC" id="2.7.7.23" evidence="1"/>
<dbReference type="EC" id="2.3.1.157" evidence="1"/>
<dbReference type="EMBL" id="AE007869">
    <property type="protein sequence ID" value="AAK87557.1"/>
    <property type="molecule type" value="Genomic_DNA"/>
</dbReference>
<dbReference type="PIR" id="AD2796">
    <property type="entry name" value="AD2796"/>
</dbReference>
<dbReference type="PIR" id="D97575">
    <property type="entry name" value="D97575"/>
</dbReference>
<dbReference type="RefSeq" id="NP_354772.1">
    <property type="nucleotide sequence ID" value="NC_003062.2"/>
</dbReference>
<dbReference type="RefSeq" id="WP_010971866.1">
    <property type="nucleotide sequence ID" value="NC_003062.2"/>
</dbReference>
<dbReference type="SMR" id="Q8UEH0"/>
<dbReference type="STRING" id="176299.Atu1787"/>
<dbReference type="EnsemblBacteria" id="AAK87557">
    <property type="protein sequence ID" value="AAK87557"/>
    <property type="gene ID" value="Atu1787"/>
</dbReference>
<dbReference type="GeneID" id="1133825"/>
<dbReference type="KEGG" id="atu:Atu1787"/>
<dbReference type="PATRIC" id="fig|176299.10.peg.1803"/>
<dbReference type="eggNOG" id="COG1207">
    <property type="taxonomic scope" value="Bacteria"/>
</dbReference>
<dbReference type="HOGENOM" id="CLU_029499_15_2_5"/>
<dbReference type="OrthoDB" id="9775031at2"/>
<dbReference type="PhylomeDB" id="Q8UEH0"/>
<dbReference type="BioCyc" id="AGRO:ATU1787-MONOMER"/>
<dbReference type="UniPathway" id="UPA00113">
    <property type="reaction ID" value="UER00532"/>
</dbReference>
<dbReference type="UniPathway" id="UPA00113">
    <property type="reaction ID" value="UER00533"/>
</dbReference>
<dbReference type="UniPathway" id="UPA00973"/>
<dbReference type="Proteomes" id="UP000000813">
    <property type="component" value="Chromosome circular"/>
</dbReference>
<dbReference type="GO" id="GO:0005737">
    <property type="term" value="C:cytoplasm"/>
    <property type="evidence" value="ECO:0007669"/>
    <property type="project" value="UniProtKB-SubCell"/>
</dbReference>
<dbReference type="GO" id="GO:0016020">
    <property type="term" value="C:membrane"/>
    <property type="evidence" value="ECO:0007669"/>
    <property type="project" value="GOC"/>
</dbReference>
<dbReference type="GO" id="GO:0019134">
    <property type="term" value="F:glucosamine-1-phosphate N-acetyltransferase activity"/>
    <property type="evidence" value="ECO:0007669"/>
    <property type="project" value="UniProtKB-UniRule"/>
</dbReference>
<dbReference type="GO" id="GO:0000287">
    <property type="term" value="F:magnesium ion binding"/>
    <property type="evidence" value="ECO:0007669"/>
    <property type="project" value="UniProtKB-UniRule"/>
</dbReference>
<dbReference type="GO" id="GO:0003977">
    <property type="term" value="F:UDP-N-acetylglucosamine diphosphorylase activity"/>
    <property type="evidence" value="ECO:0007669"/>
    <property type="project" value="UniProtKB-UniRule"/>
</dbReference>
<dbReference type="GO" id="GO:0000902">
    <property type="term" value="P:cell morphogenesis"/>
    <property type="evidence" value="ECO:0007669"/>
    <property type="project" value="UniProtKB-UniRule"/>
</dbReference>
<dbReference type="GO" id="GO:0071555">
    <property type="term" value="P:cell wall organization"/>
    <property type="evidence" value="ECO:0007669"/>
    <property type="project" value="UniProtKB-KW"/>
</dbReference>
<dbReference type="GO" id="GO:0009245">
    <property type="term" value="P:lipid A biosynthetic process"/>
    <property type="evidence" value="ECO:0007669"/>
    <property type="project" value="UniProtKB-UniRule"/>
</dbReference>
<dbReference type="GO" id="GO:0009252">
    <property type="term" value="P:peptidoglycan biosynthetic process"/>
    <property type="evidence" value="ECO:0007669"/>
    <property type="project" value="UniProtKB-UniRule"/>
</dbReference>
<dbReference type="GO" id="GO:0008360">
    <property type="term" value="P:regulation of cell shape"/>
    <property type="evidence" value="ECO:0007669"/>
    <property type="project" value="UniProtKB-KW"/>
</dbReference>
<dbReference type="GO" id="GO:0006048">
    <property type="term" value="P:UDP-N-acetylglucosamine biosynthetic process"/>
    <property type="evidence" value="ECO:0007669"/>
    <property type="project" value="UniProtKB-UniPathway"/>
</dbReference>
<dbReference type="CDD" id="cd02540">
    <property type="entry name" value="GT2_GlmU_N_bac"/>
    <property type="match status" value="1"/>
</dbReference>
<dbReference type="CDD" id="cd03353">
    <property type="entry name" value="LbH_GlmU_C"/>
    <property type="match status" value="1"/>
</dbReference>
<dbReference type="Gene3D" id="2.160.10.10">
    <property type="entry name" value="Hexapeptide repeat proteins"/>
    <property type="match status" value="1"/>
</dbReference>
<dbReference type="Gene3D" id="3.90.550.10">
    <property type="entry name" value="Spore Coat Polysaccharide Biosynthesis Protein SpsA, Chain A"/>
    <property type="match status" value="1"/>
</dbReference>
<dbReference type="HAMAP" id="MF_01631">
    <property type="entry name" value="GlmU"/>
    <property type="match status" value="1"/>
</dbReference>
<dbReference type="InterPro" id="IPR005882">
    <property type="entry name" value="Bifunctional_GlmU"/>
</dbReference>
<dbReference type="InterPro" id="IPR050065">
    <property type="entry name" value="GlmU-like"/>
</dbReference>
<dbReference type="InterPro" id="IPR038009">
    <property type="entry name" value="GlmU_C_LbH"/>
</dbReference>
<dbReference type="InterPro" id="IPR001451">
    <property type="entry name" value="Hexapep"/>
</dbReference>
<dbReference type="InterPro" id="IPR018357">
    <property type="entry name" value="Hexapep_transf_CS"/>
</dbReference>
<dbReference type="InterPro" id="IPR025877">
    <property type="entry name" value="MobA-like_NTP_Trfase"/>
</dbReference>
<dbReference type="InterPro" id="IPR029044">
    <property type="entry name" value="Nucleotide-diphossugar_trans"/>
</dbReference>
<dbReference type="InterPro" id="IPR011004">
    <property type="entry name" value="Trimer_LpxA-like_sf"/>
</dbReference>
<dbReference type="NCBIfam" id="TIGR01173">
    <property type="entry name" value="glmU"/>
    <property type="match status" value="1"/>
</dbReference>
<dbReference type="NCBIfam" id="NF010933">
    <property type="entry name" value="PRK14353.1"/>
    <property type="match status" value="1"/>
</dbReference>
<dbReference type="PANTHER" id="PTHR43584:SF3">
    <property type="entry name" value="BIFUNCTIONAL PROTEIN GLMU"/>
    <property type="match status" value="1"/>
</dbReference>
<dbReference type="PANTHER" id="PTHR43584">
    <property type="entry name" value="NUCLEOTIDYL TRANSFERASE"/>
    <property type="match status" value="1"/>
</dbReference>
<dbReference type="Pfam" id="PF00132">
    <property type="entry name" value="Hexapep"/>
    <property type="match status" value="2"/>
</dbReference>
<dbReference type="Pfam" id="PF12804">
    <property type="entry name" value="NTP_transf_3"/>
    <property type="match status" value="1"/>
</dbReference>
<dbReference type="SUPFAM" id="SSF53448">
    <property type="entry name" value="Nucleotide-diphospho-sugar transferases"/>
    <property type="match status" value="1"/>
</dbReference>
<dbReference type="SUPFAM" id="SSF51161">
    <property type="entry name" value="Trimeric LpxA-like enzymes"/>
    <property type="match status" value="1"/>
</dbReference>
<dbReference type="PROSITE" id="PS00101">
    <property type="entry name" value="HEXAPEP_TRANSFERASES"/>
    <property type="match status" value="1"/>
</dbReference>